<proteinExistence type="inferred from homology"/>
<dbReference type="EC" id="3.4.11.1" evidence="1"/>
<dbReference type="EC" id="3.4.11.10" evidence="1"/>
<dbReference type="EMBL" id="BA000035">
    <property type="protein sequence ID" value="BAC18906.1"/>
    <property type="status" value="ALT_INIT"/>
    <property type="molecule type" value="Genomic_DNA"/>
</dbReference>
<dbReference type="SMR" id="Q8FNP8"/>
<dbReference type="STRING" id="196164.gene:10742524"/>
<dbReference type="KEGG" id="cef:CE2096"/>
<dbReference type="eggNOG" id="COG0260">
    <property type="taxonomic scope" value="Bacteria"/>
</dbReference>
<dbReference type="HOGENOM" id="CLU_013734_2_0_11"/>
<dbReference type="OrthoDB" id="9809354at2"/>
<dbReference type="Proteomes" id="UP000001409">
    <property type="component" value="Chromosome"/>
</dbReference>
<dbReference type="GO" id="GO:0005737">
    <property type="term" value="C:cytoplasm"/>
    <property type="evidence" value="ECO:0007669"/>
    <property type="project" value="UniProtKB-SubCell"/>
</dbReference>
<dbReference type="GO" id="GO:0030145">
    <property type="term" value="F:manganese ion binding"/>
    <property type="evidence" value="ECO:0007669"/>
    <property type="project" value="UniProtKB-UniRule"/>
</dbReference>
<dbReference type="GO" id="GO:0070006">
    <property type="term" value="F:metalloaminopeptidase activity"/>
    <property type="evidence" value="ECO:0007669"/>
    <property type="project" value="InterPro"/>
</dbReference>
<dbReference type="GO" id="GO:0006508">
    <property type="term" value="P:proteolysis"/>
    <property type="evidence" value="ECO:0007669"/>
    <property type="project" value="UniProtKB-KW"/>
</dbReference>
<dbReference type="CDD" id="cd00433">
    <property type="entry name" value="Peptidase_M17"/>
    <property type="match status" value="1"/>
</dbReference>
<dbReference type="Gene3D" id="3.40.220.10">
    <property type="entry name" value="Leucine Aminopeptidase, subunit E, domain 1"/>
    <property type="match status" value="1"/>
</dbReference>
<dbReference type="Gene3D" id="3.40.630.10">
    <property type="entry name" value="Zn peptidases"/>
    <property type="match status" value="1"/>
</dbReference>
<dbReference type="HAMAP" id="MF_00181">
    <property type="entry name" value="Cytosol_peptidase_M17"/>
    <property type="match status" value="1"/>
</dbReference>
<dbReference type="InterPro" id="IPR011356">
    <property type="entry name" value="Leucine_aapep/pepB"/>
</dbReference>
<dbReference type="InterPro" id="IPR043472">
    <property type="entry name" value="Macro_dom-like"/>
</dbReference>
<dbReference type="InterPro" id="IPR000819">
    <property type="entry name" value="Peptidase_M17_C"/>
</dbReference>
<dbReference type="InterPro" id="IPR023042">
    <property type="entry name" value="Peptidase_M17_leu_NH2_pept"/>
</dbReference>
<dbReference type="InterPro" id="IPR008283">
    <property type="entry name" value="Peptidase_M17_N"/>
</dbReference>
<dbReference type="NCBIfam" id="NF002073">
    <property type="entry name" value="PRK00913.1-2"/>
    <property type="match status" value="1"/>
</dbReference>
<dbReference type="PANTHER" id="PTHR11963:SF23">
    <property type="entry name" value="CYTOSOL AMINOPEPTIDASE"/>
    <property type="match status" value="1"/>
</dbReference>
<dbReference type="PANTHER" id="PTHR11963">
    <property type="entry name" value="LEUCINE AMINOPEPTIDASE-RELATED"/>
    <property type="match status" value="1"/>
</dbReference>
<dbReference type="Pfam" id="PF00883">
    <property type="entry name" value="Peptidase_M17"/>
    <property type="match status" value="1"/>
</dbReference>
<dbReference type="Pfam" id="PF02789">
    <property type="entry name" value="Peptidase_M17_N"/>
    <property type="match status" value="1"/>
</dbReference>
<dbReference type="PRINTS" id="PR00481">
    <property type="entry name" value="LAMNOPPTDASE"/>
</dbReference>
<dbReference type="SUPFAM" id="SSF52949">
    <property type="entry name" value="Macro domain-like"/>
    <property type="match status" value="1"/>
</dbReference>
<dbReference type="SUPFAM" id="SSF53187">
    <property type="entry name" value="Zn-dependent exopeptidases"/>
    <property type="match status" value="1"/>
</dbReference>
<dbReference type="PROSITE" id="PS00631">
    <property type="entry name" value="CYTOSOL_AP"/>
    <property type="match status" value="1"/>
</dbReference>
<evidence type="ECO:0000255" key="1">
    <source>
        <dbReference type="HAMAP-Rule" id="MF_00181"/>
    </source>
</evidence>
<evidence type="ECO:0000305" key="2"/>
<accession>Q8FNP8</accession>
<sequence>MSRDATLPVRGRVAELKLDKKLPKNIDAVVVALFTGEGDSPQLAGGNQLNAIFTNKQQSAILRQLEAVGAKGKANEITRVPGVEDVAPVVAVGLGSAEELDDEKLRRATGTVARSLSGFENVATTIGELGLSAAVTGFGLGSYSFKGLRRAGDDAAEEGVDKPLTVHFIGGDKDEFVAAQITVDAVVLARDLVNTPSSHLYPESYAVIAANEASRYGLKTEILDENQLATDGFGGILAVGNGSSRKPRLLRLTWKHRKASKHVALVGKGVTFDTGGISLKPGANMDNMISDMGGSAAMIATIIAAARLNLKVNITATIPMAENMPSGDAFRPGDVITHYGGLTSEILNTDAEGRLILADAMALASKDNPDYLIDAATLTGAQLVSLGLRTSGVMGTDEFRDTVATTGRSVGEQAWAMPLPEELDEEIKSPVADLRNVTNSRFAGMAAAGRYLQEFVGEGIEWAHVDIAGPAYNTASPYGYTPKRATGQPVRTFIQVLQDIAER</sequence>
<comment type="function">
    <text evidence="1">Presumably involved in the processing and regular turnover of intracellular proteins. Catalyzes the removal of unsubstituted N-terminal amino acids from various peptides.</text>
</comment>
<comment type="catalytic activity">
    <reaction evidence="1">
        <text>Release of an N-terminal amino acid, Xaa-|-Yaa-, in which Xaa is preferably Leu, but may be other amino acids including Pro although not Arg or Lys, and Yaa may be Pro. Amino acid amides and methyl esters are also readily hydrolyzed, but rates on arylamides are exceedingly low.</text>
        <dbReference type="EC" id="3.4.11.1"/>
    </reaction>
</comment>
<comment type="catalytic activity">
    <reaction evidence="1">
        <text>Release of an N-terminal amino acid, preferentially leucine, but not glutamic or aspartic acids.</text>
        <dbReference type="EC" id="3.4.11.10"/>
    </reaction>
</comment>
<comment type="cofactor">
    <cofactor evidence="1">
        <name>Mn(2+)</name>
        <dbReference type="ChEBI" id="CHEBI:29035"/>
    </cofactor>
    <text evidence="1">Binds 2 manganese ions per subunit.</text>
</comment>
<comment type="subcellular location">
    <subcellularLocation>
        <location evidence="1">Cytoplasm</location>
    </subcellularLocation>
</comment>
<comment type="similarity">
    <text evidence="1">Belongs to the peptidase M17 family.</text>
</comment>
<comment type="sequence caution" evidence="2">
    <conflict type="erroneous initiation">
        <sequence resource="EMBL-CDS" id="BAC18906"/>
    </conflict>
</comment>
<name>AMPA_COREF</name>
<protein>
    <recommendedName>
        <fullName evidence="1">Probable cytosol aminopeptidase</fullName>
        <ecNumber evidence="1">3.4.11.1</ecNumber>
    </recommendedName>
    <alternativeName>
        <fullName evidence="1">Leucine aminopeptidase</fullName>
        <shortName evidence="1">LAP</shortName>
        <ecNumber evidence="1">3.4.11.10</ecNumber>
    </alternativeName>
    <alternativeName>
        <fullName evidence="1">Leucyl aminopeptidase</fullName>
    </alternativeName>
</protein>
<reference key="1">
    <citation type="journal article" date="2003" name="Genome Res.">
        <title>Comparative complete genome sequence analysis of the amino acid replacements responsible for the thermostability of Corynebacterium efficiens.</title>
        <authorList>
            <person name="Nishio Y."/>
            <person name="Nakamura Y."/>
            <person name="Kawarabayasi Y."/>
            <person name="Usuda Y."/>
            <person name="Kimura E."/>
            <person name="Sugimoto S."/>
            <person name="Matsui K."/>
            <person name="Yamagishi A."/>
            <person name="Kikuchi H."/>
            <person name="Ikeo K."/>
            <person name="Gojobori T."/>
        </authorList>
    </citation>
    <scope>NUCLEOTIDE SEQUENCE [LARGE SCALE GENOMIC DNA]</scope>
    <source>
        <strain>DSM 44549 / YS-314 / AJ 12310 / JCM 11189 / NBRC 100395</strain>
    </source>
</reference>
<organism>
    <name type="scientific">Corynebacterium efficiens (strain DSM 44549 / YS-314 / AJ 12310 / JCM 11189 / NBRC 100395)</name>
    <dbReference type="NCBI Taxonomy" id="196164"/>
    <lineage>
        <taxon>Bacteria</taxon>
        <taxon>Bacillati</taxon>
        <taxon>Actinomycetota</taxon>
        <taxon>Actinomycetes</taxon>
        <taxon>Mycobacteriales</taxon>
        <taxon>Corynebacteriaceae</taxon>
        <taxon>Corynebacterium</taxon>
    </lineage>
</organism>
<keyword id="KW-0031">Aminopeptidase</keyword>
<keyword id="KW-0963">Cytoplasm</keyword>
<keyword id="KW-0378">Hydrolase</keyword>
<keyword id="KW-0464">Manganese</keyword>
<keyword id="KW-0479">Metal-binding</keyword>
<keyword id="KW-0645">Protease</keyword>
<keyword id="KW-1185">Reference proteome</keyword>
<feature type="chain" id="PRO_0000165746" description="Probable cytosol aminopeptidase">
    <location>
        <begin position="1"/>
        <end position="503"/>
    </location>
</feature>
<feature type="active site" evidence="1">
    <location>
        <position position="280"/>
    </location>
</feature>
<feature type="active site" evidence="1">
    <location>
        <position position="354"/>
    </location>
</feature>
<feature type="binding site" evidence="1">
    <location>
        <position position="268"/>
    </location>
    <ligand>
        <name>Mn(2+)</name>
        <dbReference type="ChEBI" id="CHEBI:29035"/>
        <label>2</label>
    </ligand>
</feature>
<feature type="binding site" evidence="1">
    <location>
        <position position="273"/>
    </location>
    <ligand>
        <name>Mn(2+)</name>
        <dbReference type="ChEBI" id="CHEBI:29035"/>
        <label>1</label>
    </ligand>
</feature>
<feature type="binding site" evidence="1">
    <location>
        <position position="273"/>
    </location>
    <ligand>
        <name>Mn(2+)</name>
        <dbReference type="ChEBI" id="CHEBI:29035"/>
        <label>2</label>
    </ligand>
</feature>
<feature type="binding site" evidence="1">
    <location>
        <position position="291"/>
    </location>
    <ligand>
        <name>Mn(2+)</name>
        <dbReference type="ChEBI" id="CHEBI:29035"/>
        <label>2</label>
    </ligand>
</feature>
<feature type="binding site" evidence="1">
    <location>
        <position position="350"/>
    </location>
    <ligand>
        <name>Mn(2+)</name>
        <dbReference type="ChEBI" id="CHEBI:29035"/>
        <label>1</label>
    </ligand>
</feature>
<feature type="binding site" evidence="1">
    <location>
        <position position="352"/>
    </location>
    <ligand>
        <name>Mn(2+)</name>
        <dbReference type="ChEBI" id="CHEBI:29035"/>
        <label>1</label>
    </ligand>
</feature>
<feature type="binding site" evidence="1">
    <location>
        <position position="352"/>
    </location>
    <ligand>
        <name>Mn(2+)</name>
        <dbReference type="ChEBI" id="CHEBI:29035"/>
        <label>2</label>
    </ligand>
</feature>
<gene>
    <name evidence="1" type="primary">pepA</name>
    <name type="ordered locus">CE2096</name>
</gene>